<comment type="function">
    <text evidence="1">Catalyzes the sequential NAD-dependent oxidations of L-histidinol to L-histidinaldehyde and then to L-histidine.</text>
</comment>
<comment type="catalytic activity">
    <reaction>
        <text>L-histidinol + 2 NAD(+) + H2O = L-histidine + 2 NADH + 3 H(+)</text>
        <dbReference type="Rhea" id="RHEA:20641"/>
        <dbReference type="ChEBI" id="CHEBI:15377"/>
        <dbReference type="ChEBI" id="CHEBI:15378"/>
        <dbReference type="ChEBI" id="CHEBI:57540"/>
        <dbReference type="ChEBI" id="CHEBI:57595"/>
        <dbReference type="ChEBI" id="CHEBI:57699"/>
        <dbReference type="ChEBI" id="CHEBI:57945"/>
        <dbReference type="EC" id="1.1.1.23"/>
    </reaction>
</comment>
<comment type="cofactor">
    <cofactor evidence="1">
        <name>Zn(2+)</name>
        <dbReference type="ChEBI" id="CHEBI:29105"/>
    </cofactor>
    <text evidence="1">Binds 1 zinc ion per subunit.</text>
</comment>
<comment type="pathway">
    <text>Amino-acid biosynthesis; L-histidine biosynthesis; L-histidine from 5-phospho-alpha-D-ribose 1-diphosphate: step 9/9.</text>
</comment>
<comment type="similarity">
    <text evidence="2">Belongs to the histidinol dehydrogenase family.</text>
</comment>
<sequence>MKIKTISGAERLSLKRSIDAGTEEQRKTVRSIIEDVKANGDQAVRSYTAKFDCIEIDSPLVTKEEFEEAYTSLDSRLLQVIRQAIENIREYHERQLQSSWFYHRKDGTMLGQKVTALDSAGVYVPGGTAAYPSSVLMNVIPALVAGVERIVLVTPPGKDGLLSPGVLVAAAELGIKDIYKMGGAQAIAALAYGTETIEPVDKITGPGNIYVALAKREVFGDVDIDMIAGPSEIVVLADETAIPSEIAADLLSQAEHDKLSSCVFVTDSMALAETVSAEVNKQLETLPRREIAEASVRDYGCIYVAETMVEAIETVNTLAPEHLEIITQSPEALLGSIKHAGAIFLGRYSPEPVGDYFAGPNHVLPTNGTARFSSPLNVTDFQKKSSIISYSQSAFEEHAESIAAFARLEGLEAHARSIEARERRISK</sequence>
<organism>
    <name type="scientific">Bacillus subtilis (strain 168)</name>
    <dbReference type="NCBI Taxonomy" id="224308"/>
    <lineage>
        <taxon>Bacteria</taxon>
        <taxon>Bacillati</taxon>
        <taxon>Bacillota</taxon>
        <taxon>Bacilli</taxon>
        <taxon>Bacillales</taxon>
        <taxon>Bacillaceae</taxon>
        <taxon>Bacillus</taxon>
    </lineage>
</organism>
<evidence type="ECO:0000250" key="1"/>
<evidence type="ECO:0000305" key="2"/>
<accession>O34651</accession>
<reference key="1">
    <citation type="submission" date="1997-08" db="EMBL/GenBank/DDBJ databases">
        <title>Nucleotide sequence of the 300-304 chromosomal segment of Bacillus subtilis.</title>
        <authorList>
            <person name="Lazarevic V."/>
            <person name="Soldo B."/>
            <person name="Rivolta C."/>
            <person name="Reynolds S."/>
            <person name="Mauel C."/>
            <person name="Karamata D."/>
        </authorList>
    </citation>
    <scope>NUCLEOTIDE SEQUENCE [GENOMIC DNA]</scope>
</reference>
<reference key="2">
    <citation type="journal article" date="1997" name="Nature">
        <title>The complete genome sequence of the Gram-positive bacterium Bacillus subtilis.</title>
        <authorList>
            <person name="Kunst F."/>
            <person name="Ogasawara N."/>
            <person name="Moszer I."/>
            <person name="Albertini A.M."/>
            <person name="Alloni G."/>
            <person name="Azevedo V."/>
            <person name="Bertero M.G."/>
            <person name="Bessieres P."/>
            <person name="Bolotin A."/>
            <person name="Borchert S."/>
            <person name="Borriss R."/>
            <person name="Boursier L."/>
            <person name="Brans A."/>
            <person name="Braun M."/>
            <person name="Brignell S.C."/>
            <person name="Bron S."/>
            <person name="Brouillet S."/>
            <person name="Bruschi C.V."/>
            <person name="Caldwell B."/>
            <person name="Capuano V."/>
            <person name="Carter N.M."/>
            <person name="Choi S.-K."/>
            <person name="Codani J.-J."/>
            <person name="Connerton I.F."/>
            <person name="Cummings N.J."/>
            <person name="Daniel R.A."/>
            <person name="Denizot F."/>
            <person name="Devine K.M."/>
            <person name="Duesterhoeft A."/>
            <person name="Ehrlich S.D."/>
            <person name="Emmerson P.T."/>
            <person name="Entian K.-D."/>
            <person name="Errington J."/>
            <person name="Fabret C."/>
            <person name="Ferrari E."/>
            <person name="Foulger D."/>
            <person name="Fritz C."/>
            <person name="Fujita M."/>
            <person name="Fujita Y."/>
            <person name="Fuma S."/>
            <person name="Galizzi A."/>
            <person name="Galleron N."/>
            <person name="Ghim S.-Y."/>
            <person name="Glaser P."/>
            <person name="Goffeau A."/>
            <person name="Golightly E.J."/>
            <person name="Grandi G."/>
            <person name="Guiseppi G."/>
            <person name="Guy B.J."/>
            <person name="Haga K."/>
            <person name="Haiech J."/>
            <person name="Harwood C.R."/>
            <person name="Henaut A."/>
            <person name="Hilbert H."/>
            <person name="Holsappel S."/>
            <person name="Hosono S."/>
            <person name="Hullo M.-F."/>
            <person name="Itaya M."/>
            <person name="Jones L.-M."/>
            <person name="Joris B."/>
            <person name="Karamata D."/>
            <person name="Kasahara Y."/>
            <person name="Klaerr-Blanchard M."/>
            <person name="Klein C."/>
            <person name="Kobayashi Y."/>
            <person name="Koetter P."/>
            <person name="Koningstein G."/>
            <person name="Krogh S."/>
            <person name="Kumano M."/>
            <person name="Kurita K."/>
            <person name="Lapidus A."/>
            <person name="Lardinois S."/>
            <person name="Lauber J."/>
            <person name="Lazarevic V."/>
            <person name="Lee S.-M."/>
            <person name="Levine A."/>
            <person name="Liu H."/>
            <person name="Masuda S."/>
            <person name="Mauel C."/>
            <person name="Medigue C."/>
            <person name="Medina N."/>
            <person name="Mellado R.P."/>
            <person name="Mizuno M."/>
            <person name="Moestl D."/>
            <person name="Nakai S."/>
            <person name="Noback M."/>
            <person name="Noone D."/>
            <person name="O'Reilly M."/>
            <person name="Ogawa K."/>
            <person name="Ogiwara A."/>
            <person name="Oudega B."/>
            <person name="Park S.-H."/>
            <person name="Parro V."/>
            <person name="Pohl T.M."/>
            <person name="Portetelle D."/>
            <person name="Porwollik S."/>
            <person name="Prescott A.M."/>
            <person name="Presecan E."/>
            <person name="Pujic P."/>
            <person name="Purnelle B."/>
            <person name="Rapoport G."/>
            <person name="Rey M."/>
            <person name="Reynolds S."/>
            <person name="Rieger M."/>
            <person name="Rivolta C."/>
            <person name="Rocha E."/>
            <person name="Roche B."/>
            <person name="Rose M."/>
            <person name="Sadaie Y."/>
            <person name="Sato T."/>
            <person name="Scanlan E."/>
            <person name="Schleich S."/>
            <person name="Schroeter R."/>
            <person name="Scoffone F."/>
            <person name="Sekiguchi J."/>
            <person name="Sekowska A."/>
            <person name="Seror S.J."/>
            <person name="Serror P."/>
            <person name="Shin B.-S."/>
            <person name="Soldo B."/>
            <person name="Sorokin A."/>
            <person name="Tacconi E."/>
            <person name="Takagi T."/>
            <person name="Takahashi H."/>
            <person name="Takemaru K."/>
            <person name="Takeuchi M."/>
            <person name="Tamakoshi A."/>
            <person name="Tanaka T."/>
            <person name="Terpstra P."/>
            <person name="Tognoni A."/>
            <person name="Tosato V."/>
            <person name="Uchiyama S."/>
            <person name="Vandenbol M."/>
            <person name="Vannier F."/>
            <person name="Vassarotti A."/>
            <person name="Viari A."/>
            <person name="Wambutt R."/>
            <person name="Wedler E."/>
            <person name="Wedler H."/>
            <person name="Weitzenegger T."/>
            <person name="Winters P."/>
            <person name="Wipat A."/>
            <person name="Yamamoto H."/>
            <person name="Yamane K."/>
            <person name="Yasumoto K."/>
            <person name="Yata K."/>
            <person name="Yoshida K."/>
            <person name="Yoshikawa H.-F."/>
            <person name="Zumstein E."/>
            <person name="Yoshikawa H."/>
            <person name="Danchin A."/>
        </authorList>
    </citation>
    <scope>NUCLEOTIDE SEQUENCE [LARGE SCALE GENOMIC DNA]</scope>
    <source>
        <strain>168</strain>
    </source>
</reference>
<feature type="chain" id="PRO_0000135728" description="Histidinol dehydrogenase">
    <location>
        <begin position="1"/>
        <end position="427"/>
    </location>
</feature>
<feature type="active site" description="Proton acceptor" evidence="1">
    <location>
        <position position="321"/>
    </location>
</feature>
<feature type="active site" description="Proton acceptor" evidence="1">
    <location>
        <position position="322"/>
    </location>
</feature>
<feature type="binding site" evidence="1">
    <location>
        <position position="123"/>
    </location>
    <ligand>
        <name>NAD(+)</name>
        <dbReference type="ChEBI" id="CHEBI:57540"/>
    </ligand>
</feature>
<feature type="binding site" evidence="1">
    <location>
        <position position="185"/>
    </location>
    <ligand>
        <name>NAD(+)</name>
        <dbReference type="ChEBI" id="CHEBI:57540"/>
    </ligand>
</feature>
<feature type="binding site" evidence="1">
    <location>
        <position position="208"/>
    </location>
    <ligand>
        <name>NAD(+)</name>
        <dbReference type="ChEBI" id="CHEBI:57540"/>
    </ligand>
</feature>
<feature type="binding site" evidence="1">
    <location>
        <position position="231"/>
    </location>
    <ligand>
        <name>substrate</name>
    </ligand>
</feature>
<feature type="binding site" evidence="1">
    <location>
        <position position="253"/>
    </location>
    <ligand>
        <name>substrate</name>
    </ligand>
</feature>
<feature type="binding site" evidence="1">
    <location>
        <position position="253"/>
    </location>
    <ligand>
        <name>Zn(2+)</name>
        <dbReference type="ChEBI" id="CHEBI:29105"/>
    </ligand>
</feature>
<feature type="binding site" evidence="1">
    <location>
        <position position="256"/>
    </location>
    <ligand>
        <name>substrate</name>
    </ligand>
</feature>
<feature type="binding site" evidence="1">
    <location>
        <position position="256"/>
    </location>
    <ligand>
        <name>Zn(2+)</name>
        <dbReference type="ChEBI" id="CHEBI:29105"/>
    </ligand>
</feature>
<feature type="binding site" evidence="1">
    <location>
        <position position="322"/>
    </location>
    <ligand>
        <name>substrate</name>
    </ligand>
</feature>
<feature type="binding site" evidence="1">
    <location>
        <position position="355"/>
    </location>
    <ligand>
        <name>substrate</name>
    </ligand>
</feature>
<feature type="binding site" evidence="1">
    <location>
        <position position="355"/>
    </location>
    <ligand>
        <name>Zn(2+)</name>
        <dbReference type="ChEBI" id="CHEBI:29105"/>
    </ligand>
</feature>
<feature type="binding site" evidence="1">
    <location>
        <position position="409"/>
    </location>
    <ligand>
        <name>substrate</name>
    </ligand>
</feature>
<feature type="binding site" evidence="1">
    <location>
        <position position="414"/>
    </location>
    <ligand>
        <name>substrate</name>
    </ligand>
</feature>
<feature type="binding site" evidence="1">
    <location>
        <position position="414"/>
    </location>
    <ligand>
        <name>Zn(2+)</name>
        <dbReference type="ChEBI" id="CHEBI:29105"/>
    </ligand>
</feature>
<gene>
    <name type="primary">hisD</name>
    <name type="ordered locus">BSU34910</name>
</gene>
<protein>
    <recommendedName>
        <fullName>Histidinol dehydrogenase</fullName>
        <shortName>HDH</shortName>
        <ecNumber>1.1.1.23</ecNumber>
    </recommendedName>
</protein>
<name>HISX_BACSU</name>
<dbReference type="EC" id="1.1.1.23"/>
<dbReference type="EMBL" id="AF017113">
    <property type="protein sequence ID" value="AAC67295.1"/>
    <property type="molecule type" value="Genomic_DNA"/>
</dbReference>
<dbReference type="EMBL" id="AL009126">
    <property type="protein sequence ID" value="CAB15496.1"/>
    <property type="molecule type" value="Genomic_DNA"/>
</dbReference>
<dbReference type="PIR" id="A69641">
    <property type="entry name" value="A69641"/>
</dbReference>
<dbReference type="RefSeq" id="NP_391371.1">
    <property type="nucleotide sequence ID" value="NC_000964.3"/>
</dbReference>
<dbReference type="RefSeq" id="WP_003243286.1">
    <property type="nucleotide sequence ID" value="NZ_OZ025638.1"/>
</dbReference>
<dbReference type="SMR" id="O34651"/>
<dbReference type="FunCoup" id="O34651">
    <property type="interactions" value="644"/>
</dbReference>
<dbReference type="STRING" id="224308.BSU34910"/>
<dbReference type="PaxDb" id="224308-BSU34910"/>
<dbReference type="EnsemblBacteria" id="CAB15496">
    <property type="protein sequence ID" value="CAB15496"/>
    <property type="gene ID" value="BSU_34910"/>
</dbReference>
<dbReference type="GeneID" id="936584"/>
<dbReference type="KEGG" id="bsu:BSU34910"/>
<dbReference type="PATRIC" id="fig|224308.179.peg.3779"/>
<dbReference type="eggNOG" id="COG0141">
    <property type="taxonomic scope" value="Bacteria"/>
</dbReference>
<dbReference type="InParanoid" id="O34651"/>
<dbReference type="OrthoDB" id="9805269at2"/>
<dbReference type="PhylomeDB" id="O34651"/>
<dbReference type="BioCyc" id="BSUB:BSU34910-MONOMER"/>
<dbReference type="UniPathway" id="UPA00031">
    <property type="reaction ID" value="UER00014"/>
</dbReference>
<dbReference type="Proteomes" id="UP000001570">
    <property type="component" value="Chromosome"/>
</dbReference>
<dbReference type="GO" id="GO:0005737">
    <property type="term" value="C:cytoplasm"/>
    <property type="evidence" value="ECO:0000318"/>
    <property type="project" value="GO_Central"/>
</dbReference>
<dbReference type="GO" id="GO:0005829">
    <property type="term" value="C:cytosol"/>
    <property type="evidence" value="ECO:0000318"/>
    <property type="project" value="GO_Central"/>
</dbReference>
<dbReference type="GO" id="GO:0004399">
    <property type="term" value="F:histidinol dehydrogenase activity"/>
    <property type="evidence" value="ECO:0000318"/>
    <property type="project" value="GO_Central"/>
</dbReference>
<dbReference type="GO" id="GO:0051287">
    <property type="term" value="F:NAD binding"/>
    <property type="evidence" value="ECO:0007669"/>
    <property type="project" value="InterPro"/>
</dbReference>
<dbReference type="GO" id="GO:0008270">
    <property type="term" value="F:zinc ion binding"/>
    <property type="evidence" value="ECO:0007669"/>
    <property type="project" value="UniProtKB-UniRule"/>
</dbReference>
<dbReference type="GO" id="GO:0000105">
    <property type="term" value="P:L-histidine biosynthetic process"/>
    <property type="evidence" value="ECO:0000318"/>
    <property type="project" value="GO_Central"/>
</dbReference>
<dbReference type="CDD" id="cd06572">
    <property type="entry name" value="Histidinol_dh"/>
    <property type="match status" value="1"/>
</dbReference>
<dbReference type="FunFam" id="1.20.5.1300:FF:000006">
    <property type="entry name" value="Histidinol dehydrogenase"/>
    <property type="match status" value="1"/>
</dbReference>
<dbReference type="FunFam" id="3.40.50.1980:FF:000001">
    <property type="entry name" value="Histidinol dehydrogenase"/>
    <property type="match status" value="1"/>
</dbReference>
<dbReference type="FunFam" id="3.40.50.1980:FF:000026">
    <property type="entry name" value="Histidinol dehydrogenase"/>
    <property type="match status" value="1"/>
</dbReference>
<dbReference type="Gene3D" id="1.20.5.1300">
    <property type="match status" value="1"/>
</dbReference>
<dbReference type="Gene3D" id="3.40.50.1980">
    <property type="entry name" value="Nitrogenase molybdenum iron protein domain"/>
    <property type="match status" value="2"/>
</dbReference>
<dbReference type="HAMAP" id="MF_01024">
    <property type="entry name" value="HisD"/>
    <property type="match status" value="1"/>
</dbReference>
<dbReference type="InterPro" id="IPR016161">
    <property type="entry name" value="Ald_DH/histidinol_DH"/>
</dbReference>
<dbReference type="InterPro" id="IPR001692">
    <property type="entry name" value="Histidinol_DH_CS"/>
</dbReference>
<dbReference type="InterPro" id="IPR022695">
    <property type="entry name" value="Histidinol_DH_monofunct"/>
</dbReference>
<dbReference type="InterPro" id="IPR012131">
    <property type="entry name" value="Hstdl_DH"/>
</dbReference>
<dbReference type="NCBIfam" id="TIGR00069">
    <property type="entry name" value="hisD"/>
    <property type="match status" value="1"/>
</dbReference>
<dbReference type="PANTHER" id="PTHR21256:SF2">
    <property type="entry name" value="HISTIDINE BIOSYNTHESIS TRIFUNCTIONAL PROTEIN"/>
    <property type="match status" value="1"/>
</dbReference>
<dbReference type="PANTHER" id="PTHR21256">
    <property type="entry name" value="HISTIDINOL DEHYDROGENASE HDH"/>
    <property type="match status" value="1"/>
</dbReference>
<dbReference type="Pfam" id="PF00815">
    <property type="entry name" value="Histidinol_dh"/>
    <property type="match status" value="1"/>
</dbReference>
<dbReference type="PIRSF" id="PIRSF000099">
    <property type="entry name" value="Histidinol_dh"/>
    <property type="match status" value="1"/>
</dbReference>
<dbReference type="PRINTS" id="PR00083">
    <property type="entry name" value="HOLDHDRGNASE"/>
</dbReference>
<dbReference type="SUPFAM" id="SSF53720">
    <property type="entry name" value="ALDH-like"/>
    <property type="match status" value="1"/>
</dbReference>
<dbReference type="PROSITE" id="PS00611">
    <property type="entry name" value="HISOL_DEHYDROGENASE"/>
    <property type="match status" value="1"/>
</dbReference>
<proteinExistence type="inferred from homology"/>
<keyword id="KW-0028">Amino-acid biosynthesis</keyword>
<keyword id="KW-0368">Histidine biosynthesis</keyword>
<keyword id="KW-0479">Metal-binding</keyword>
<keyword id="KW-0520">NAD</keyword>
<keyword id="KW-0560">Oxidoreductase</keyword>
<keyword id="KW-1185">Reference proteome</keyword>
<keyword id="KW-0862">Zinc</keyword>